<comment type="function">
    <text evidence="1">Modifies, by uridylylation and deuridylylation, the PII regulatory proteins (GlnB and homologs), in response to the nitrogen status of the cell that GlnD senses through the glutamine level. Under low glutamine levels, catalyzes the conversion of the PII proteins and UTP to PII-UMP and PPi, while under higher glutamine levels, GlnD hydrolyzes PII-UMP to PII and UMP (deuridylylation). Thus, controls uridylylation state and activity of the PII proteins, and plays an important role in the regulation of nitrogen assimilation and metabolism.</text>
</comment>
<comment type="catalytic activity">
    <reaction evidence="1">
        <text>[protein-PII]-L-tyrosine + UTP = [protein-PII]-uridylyl-L-tyrosine + diphosphate</text>
        <dbReference type="Rhea" id="RHEA:13673"/>
        <dbReference type="Rhea" id="RHEA-COMP:12147"/>
        <dbReference type="Rhea" id="RHEA-COMP:12148"/>
        <dbReference type="ChEBI" id="CHEBI:33019"/>
        <dbReference type="ChEBI" id="CHEBI:46398"/>
        <dbReference type="ChEBI" id="CHEBI:46858"/>
        <dbReference type="ChEBI" id="CHEBI:90602"/>
        <dbReference type="EC" id="2.7.7.59"/>
    </reaction>
</comment>
<comment type="catalytic activity">
    <reaction evidence="1">
        <text>[protein-PII]-uridylyl-L-tyrosine + H2O = [protein-PII]-L-tyrosine + UMP + H(+)</text>
        <dbReference type="Rhea" id="RHEA:48600"/>
        <dbReference type="Rhea" id="RHEA-COMP:12147"/>
        <dbReference type="Rhea" id="RHEA-COMP:12148"/>
        <dbReference type="ChEBI" id="CHEBI:15377"/>
        <dbReference type="ChEBI" id="CHEBI:15378"/>
        <dbReference type="ChEBI" id="CHEBI:46858"/>
        <dbReference type="ChEBI" id="CHEBI:57865"/>
        <dbReference type="ChEBI" id="CHEBI:90602"/>
    </reaction>
</comment>
<comment type="cofactor">
    <cofactor evidence="1">
        <name>Mg(2+)</name>
        <dbReference type="ChEBI" id="CHEBI:18420"/>
    </cofactor>
</comment>
<comment type="activity regulation">
    <text evidence="1">Uridylyltransferase (UTase) activity is inhibited by glutamine, while glutamine activates uridylyl-removing (UR) activity.</text>
</comment>
<comment type="domain">
    <text evidence="1">Has four distinct domains: an N-terminal nucleotidyltransferase (NT) domain responsible for UTase activity, a central HD domain that encodes UR activity, and two C-terminal ACT domains that seem to have a role in glutamine sensing.</text>
</comment>
<comment type="similarity">
    <text evidence="1">Belongs to the GlnD family.</text>
</comment>
<comment type="sequence caution" evidence="3">
    <conflict type="frameshift">
        <sequence resource="EMBL-CDS" id="BAA75913"/>
    </conflict>
</comment>
<proteinExistence type="inferred from homology"/>
<dbReference type="EC" id="2.7.7.59" evidence="1"/>
<dbReference type="EC" id="3.1.4.-" evidence="1"/>
<dbReference type="EMBL" id="AB024601">
    <property type="protein sequence ID" value="BAA75913.1"/>
    <property type="status" value="ALT_FRAME"/>
    <property type="molecule type" value="Genomic_DNA"/>
</dbReference>
<dbReference type="EMBL" id="AE004091">
    <property type="protein sequence ID" value="AAG07046.1"/>
    <property type="molecule type" value="Genomic_DNA"/>
</dbReference>
<dbReference type="PIR" id="E83189">
    <property type="entry name" value="E83189"/>
</dbReference>
<dbReference type="RefSeq" id="NP_252348.1">
    <property type="nucleotide sequence ID" value="NC_002516.2"/>
</dbReference>
<dbReference type="RefSeq" id="WP_003113862.1">
    <property type="nucleotide sequence ID" value="NZ_QZGE01000001.1"/>
</dbReference>
<dbReference type="SMR" id="Q9Z9H0"/>
<dbReference type="FunCoup" id="Q9Z9H0">
    <property type="interactions" value="340"/>
</dbReference>
<dbReference type="STRING" id="208964.PA3658"/>
<dbReference type="PaxDb" id="208964-PA3658"/>
<dbReference type="GeneID" id="880565"/>
<dbReference type="KEGG" id="pae:PA3658"/>
<dbReference type="PATRIC" id="fig|208964.12.peg.3827"/>
<dbReference type="PseudoCAP" id="PA3658"/>
<dbReference type="HOGENOM" id="CLU_012833_0_0_6"/>
<dbReference type="InParanoid" id="Q9Z9H0"/>
<dbReference type="OrthoDB" id="9758038at2"/>
<dbReference type="PhylomeDB" id="Q9Z9H0"/>
<dbReference type="BioCyc" id="PAER208964:G1FZ6-3728-MONOMER"/>
<dbReference type="Proteomes" id="UP000002438">
    <property type="component" value="Chromosome"/>
</dbReference>
<dbReference type="GO" id="GO:0008773">
    <property type="term" value="F:[protein-PII] uridylyltransferase activity"/>
    <property type="evidence" value="ECO:0000318"/>
    <property type="project" value="GO_Central"/>
</dbReference>
<dbReference type="GO" id="GO:0008081">
    <property type="term" value="F:phosphoric diester hydrolase activity"/>
    <property type="evidence" value="ECO:0007669"/>
    <property type="project" value="UniProtKB-UniRule"/>
</dbReference>
<dbReference type="GO" id="GO:0006808">
    <property type="term" value="P:regulation of nitrogen utilization"/>
    <property type="evidence" value="ECO:0007669"/>
    <property type="project" value="UniProtKB-UniRule"/>
</dbReference>
<dbReference type="CDD" id="cd04899">
    <property type="entry name" value="ACT_ACR-UUR-like_2"/>
    <property type="match status" value="1"/>
</dbReference>
<dbReference type="CDD" id="cd04900">
    <property type="entry name" value="ACT_UUR-like_1"/>
    <property type="match status" value="1"/>
</dbReference>
<dbReference type="CDD" id="cd00077">
    <property type="entry name" value="HDc"/>
    <property type="match status" value="1"/>
</dbReference>
<dbReference type="CDD" id="cd05401">
    <property type="entry name" value="NT_GlnE_GlnD_like"/>
    <property type="match status" value="1"/>
</dbReference>
<dbReference type="FunFam" id="1.10.3090.10:FF:000005">
    <property type="entry name" value="Bifunctional uridylyltransferase/uridylyl-removing enzyme"/>
    <property type="match status" value="1"/>
</dbReference>
<dbReference type="Gene3D" id="3.30.460.10">
    <property type="entry name" value="Beta Polymerase, domain 2"/>
    <property type="match status" value="1"/>
</dbReference>
<dbReference type="Gene3D" id="1.10.3090.10">
    <property type="entry name" value="cca-adding enzyme, domain 2"/>
    <property type="match status" value="1"/>
</dbReference>
<dbReference type="Gene3D" id="1.20.120.330">
    <property type="entry name" value="Nucleotidyltransferases domain 2"/>
    <property type="match status" value="1"/>
</dbReference>
<dbReference type="HAMAP" id="MF_00277">
    <property type="entry name" value="PII_uridylyl_transf"/>
    <property type="match status" value="1"/>
</dbReference>
<dbReference type="InterPro" id="IPR045865">
    <property type="entry name" value="ACT-like_dom_sf"/>
</dbReference>
<dbReference type="InterPro" id="IPR002912">
    <property type="entry name" value="ACT_dom"/>
</dbReference>
<dbReference type="InterPro" id="IPR003607">
    <property type="entry name" value="HD/PDEase_dom"/>
</dbReference>
<dbReference type="InterPro" id="IPR006674">
    <property type="entry name" value="HD_domain"/>
</dbReference>
<dbReference type="InterPro" id="IPR043519">
    <property type="entry name" value="NT_sf"/>
</dbReference>
<dbReference type="InterPro" id="IPR013546">
    <property type="entry name" value="PII_UdlTrfase/GS_AdlTrfase"/>
</dbReference>
<dbReference type="InterPro" id="IPR002934">
    <property type="entry name" value="Polymerase_NTP_transf_dom"/>
</dbReference>
<dbReference type="InterPro" id="IPR010043">
    <property type="entry name" value="UTase/UR"/>
</dbReference>
<dbReference type="NCBIfam" id="NF001366">
    <property type="entry name" value="PRK00275.1"/>
    <property type="match status" value="1"/>
</dbReference>
<dbReference type="NCBIfam" id="TIGR01693">
    <property type="entry name" value="UTase_glnD"/>
    <property type="match status" value="1"/>
</dbReference>
<dbReference type="PANTHER" id="PTHR47320">
    <property type="entry name" value="BIFUNCTIONAL URIDYLYLTRANSFERASE/URIDYLYL-REMOVING ENZYME"/>
    <property type="match status" value="1"/>
</dbReference>
<dbReference type="PANTHER" id="PTHR47320:SF1">
    <property type="entry name" value="BIFUNCTIONAL URIDYLYLTRANSFERASE_URIDYLYL-REMOVING ENZYME"/>
    <property type="match status" value="1"/>
</dbReference>
<dbReference type="Pfam" id="PF01842">
    <property type="entry name" value="ACT"/>
    <property type="match status" value="1"/>
</dbReference>
<dbReference type="Pfam" id="PF08335">
    <property type="entry name" value="GlnD_UR_UTase"/>
    <property type="match status" value="1"/>
</dbReference>
<dbReference type="Pfam" id="PF01966">
    <property type="entry name" value="HD"/>
    <property type="match status" value="1"/>
</dbReference>
<dbReference type="Pfam" id="PF01909">
    <property type="entry name" value="NTP_transf_2"/>
    <property type="match status" value="1"/>
</dbReference>
<dbReference type="PIRSF" id="PIRSF006288">
    <property type="entry name" value="PII_uridyltransf"/>
    <property type="match status" value="1"/>
</dbReference>
<dbReference type="SMART" id="SM00471">
    <property type="entry name" value="HDc"/>
    <property type="match status" value="1"/>
</dbReference>
<dbReference type="SUPFAM" id="SSF55021">
    <property type="entry name" value="ACT-like"/>
    <property type="match status" value="1"/>
</dbReference>
<dbReference type="SUPFAM" id="SSF109604">
    <property type="entry name" value="HD-domain/PDEase-like"/>
    <property type="match status" value="1"/>
</dbReference>
<dbReference type="SUPFAM" id="SSF81301">
    <property type="entry name" value="Nucleotidyltransferase"/>
    <property type="match status" value="1"/>
</dbReference>
<dbReference type="SUPFAM" id="SSF81593">
    <property type="entry name" value="Nucleotidyltransferase substrate binding subunit/domain"/>
    <property type="match status" value="1"/>
</dbReference>
<dbReference type="PROSITE" id="PS51671">
    <property type="entry name" value="ACT"/>
    <property type="match status" value="2"/>
</dbReference>
<dbReference type="PROSITE" id="PS51831">
    <property type="entry name" value="HD"/>
    <property type="match status" value="1"/>
</dbReference>
<keyword id="KW-0378">Hydrolase</keyword>
<keyword id="KW-0460">Magnesium</keyword>
<keyword id="KW-0511">Multifunctional enzyme</keyword>
<keyword id="KW-0548">Nucleotidyltransferase</keyword>
<keyword id="KW-1185">Reference proteome</keyword>
<keyword id="KW-0677">Repeat</keyword>
<keyword id="KW-0808">Transferase</keyword>
<organism>
    <name type="scientific">Pseudomonas aeruginosa (strain ATCC 15692 / DSM 22644 / CIP 104116 / JCM 14847 / LMG 12228 / 1C / PRS 101 / PAO1)</name>
    <dbReference type="NCBI Taxonomy" id="208964"/>
    <lineage>
        <taxon>Bacteria</taxon>
        <taxon>Pseudomonadati</taxon>
        <taxon>Pseudomonadota</taxon>
        <taxon>Gammaproteobacteria</taxon>
        <taxon>Pseudomonadales</taxon>
        <taxon>Pseudomonadaceae</taxon>
        <taxon>Pseudomonas</taxon>
    </lineage>
</organism>
<reference key="1">
    <citation type="submission" date="1999-03" db="EMBL/GenBank/DDBJ databases">
        <authorList>
            <person name="Nashimoto H."/>
        </authorList>
    </citation>
    <scope>NUCLEOTIDE SEQUENCE [GENOMIC DNA]</scope>
    <source>
        <strain>ATCC 15692 / DSM 22644 / CIP 104116 / JCM 14847 / LMG 12228 / 1C / PRS 101 / PAO1</strain>
    </source>
</reference>
<reference key="2">
    <citation type="journal article" date="2000" name="Nature">
        <title>Complete genome sequence of Pseudomonas aeruginosa PAO1, an opportunistic pathogen.</title>
        <authorList>
            <person name="Stover C.K."/>
            <person name="Pham X.-Q.T."/>
            <person name="Erwin A.L."/>
            <person name="Mizoguchi S.D."/>
            <person name="Warrener P."/>
            <person name="Hickey M.J."/>
            <person name="Brinkman F.S.L."/>
            <person name="Hufnagle W.O."/>
            <person name="Kowalik D.J."/>
            <person name="Lagrou M."/>
            <person name="Garber R.L."/>
            <person name="Goltry L."/>
            <person name="Tolentino E."/>
            <person name="Westbrock-Wadman S."/>
            <person name="Yuan Y."/>
            <person name="Brody L.L."/>
            <person name="Coulter S.N."/>
            <person name="Folger K.R."/>
            <person name="Kas A."/>
            <person name="Larbig K."/>
            <person name="Lim R.M."/>
            <person name="Smith K.A."/>
            <person name="Spencer D.H."/>
            <person name="Wong G.K.-S."/>
            <person name="Wu Z."/>
            <person name="Paulsen I.T."/>
            <person name="Reizer J."/>
            <person name="Saier M.H. Jr."/>
            <person name="Hancock R.E.W."/>
            <person name="Lory S."/>
            <person name="Olson M.V."/>
        </authorList>
    </citation>
    <scope>NUCLEOTIDE SEQUENCE [LARGE SCALE GENOMIC DNA]</scope>
    <source>
        <strain>ATCC 15692 / DSM 22644 / CIP 104116 / JCM 14847 / LMG 12228 / 1C / PRS 101 / PAO1</strain>
    </source>
</reference>
<sequence length="900" mass="103404">MPQVDPELFDRGQFQAELALKSSPIAAFKKAIRQFREVLDNRFNSGRDIRRLIEDRAWCVDQILQQAWQRFDWGDDADIALVAVGGYGRGELHPYSDVDLLILLDSEDQESFREPIEGFLTLLWDIGLEVGQSVRSVQQCAEEARADLTVITTLMECRTICGPDSLRQRMLQVTGSAHMWPSKEFFLAKRHEQQRRHAKYNDTEYNLEPNVKGSPGGLRDIQTILWMARRQFGSLNLHALVREGFLVESECSMLASSQEFLWRVRYALHMLAGRAEDRLLFDHQRSIARLFGYEDNDVKLAVERFMQKYYRVVMAISELNDLIIQHFEEVILPCEQPVQIQPLNSRFQLRDGYIEVTHPNVFKRTPFALLEIFVLMAQHPEIKGVRADTIRLLRDSRHLIDDEFRHDIRNTSLFIELFKSSQGIHRNLRRMNRYGILGRYLPEFGHIIGQMQHDLFHIYTVDAHTLNLIKHLRKLNRPEMAEKYPLASKIIDRLPKPELIYIAGLYHDIAKGRGGDHSELGAVDAEAFCQSHQLPLWDTQLVSWLVQNHLVMSTTAQRKDLSDPQVIFDFAQLVGDQTHLDYLYVLTVADINATNPTLWNSWRASLLRQLYTETKRALRRGLENPVDREEQIRQTQTAALDQLVRNGIDQDDAEQLWSQLGDDYFLRHTAGDVAWHTEAILQHPDDGTPLVLIKETTQREFESGSQIFIYAADQHDFFAVTVAAMDQLNLSIQDARIITSTSQFTLDTYIVLDADGDSIGNNPERIAEIREGLIDALKNPDDYPTIIQRRVPRQLKHFAFAPQVTISTDALRQVSVLEVIAPDRPGLLARIGGIFLDFDLSVQNAKIATLGERVEDVFYITDARNQPLADPDLCKRLQAALVEQLSQDNGRDTLPTRINF</sequence>
<protein>
    <recommendedName>
        <fullName evidence="1">Bifunctional uridylyltransferase/uridylyl-removing enzyme</fullName>
        <shortName evidence="1">UTase/UR</shortName>
    </recommendedName>
    <alternativeName>
        <fullName evidence="1">Bifunctional [protein-PII] modification enzyme</fullName>
    </alternativeName>
    <alternativeName>
        <fullName evidence="1">Bifunctional nitrogen sensor protein</fullName>
    </alternativeName>
    <domain>
        <recommendedName>
            <fullName evidence="1">[Protein-PII] uridylyltransferase</fullName>
            <shortName evidence="1">PII uridylyltransferase</shortName>
            <shortName evidence="1">UTase</shortName>
            <ecNumber evidence="1">2.7.7.59</ecNumber>
        </recommendedName>
    </domain>
    <domain>
        <recommendedName>
            <fullName evidence="1">[Protein-PII]-UMP uridylyl-removing enzyme</fullName>
            <shortName evidence="1">UR</shortName>
            <ecNumber evidence="1">3.1.4.-</ecNumber>
        </recommendedName>
    </domain>
</protein>
<feature type="chain" id="PRO_0000192752" description="Bifunctional uridylyltransferase/uridylyl-removing enzyme">
    <location>
        <begin position="1"/>
        <end position="900"/>
    </location>
</feature>
<feature type="domain" description="HD" evidence="2">
    <location>
        <begin position="461"/>
        <end position="583"/>
    </location>
</feature>
<feature type="domain" description="ACT 1" evidence="1">
    <location>
        <begin position="706"/>
        <end position="789"/>
    </location>
</feature>
<feature type="domain" description="ACT 2" evidence="1">
    <location>
        <begin position="816"/>
        <end position="891"/>
    </location>
</feature>
<feature type="region of interest" description="Uridylyltransferase">
    <location>
        <begin position="1"/>
        <end position="342"/>
    </location>
</feature>
<feature type="region of interest" description="Uridylyl-removing">
    <location>
        <begin position="343"/>
        <end position="705"/>
    </location>
</feature>
<feature type="sequence conflict" description="In Ref. 1; BAA75913." evidence="3" ref="1">
    <original>L</original>
    <variation>V</variation>
    <location>
        <position position="811"/>
    </location>
</feature>
<gene>
    <name evidence="1" type="primary">glnD</name>
    <name type="ordered locus">PA3658</name>
</gene>
<evidence type="ECO:0000255" key="1">
    <source>
        <dbReference type="HAMAP-Rule" id="MF_00277"/>
    </source>
</evidence>
<evidence type="ECO:0000255" key="2">
    <source>
        <dbReference type="PROSITE-ProRule" id="PRU01175"/>
    </source>
</evidence>
<evidence type="ECO:0000305" key="3"/>
<name>GLND_PSEAE</name>
<accession>Q9Z9H0</accession>